<keyword id="KW-0025">Alternative splicing</keyword>
<keyword id="KW-1267">Proteomics identification</keyword>
<keyword id="KW-1185">Reference proteome</keyword>
<keyword id="KW-0964">Secreted</keyword>
<keyword id="KW-0732">Signal</keyword>
<accession>Q6ZVW7</accession>
<accession>A0A8Q3WKV1</accession>
<accession>A6NCN4</accession>
<accession>A6PVC1</accession>
<comment type="subcellular location">
    <subcellularLocation>
        <location evidence="1">Secreted</location>
    </subcellularLocation>
</comment>
<comment type="alternative products">
    <event type="alternative splicing"/>
    <isoform>
        <id>Q6ZVW7-1</id>
        <name>1</name>
        <sequence type="displayed"/>
    </isoform>
    <isoform>
        <id>Q6ZVW7-2</id>
        <name>2</name>
        <sequence type="described" ref="VSP_062154 VSP_062155 VSP_062156 VSP_062157"/>
    </isoform>
</comment>
<comment type="miscellaneous">
    <molecule>Isoform 1</molecule>
    <text evidence="2">Gene prediction.</text>
</comment>
<feature type="signal peptide" evidence="1">
    <location>
        <begin position="1"/>
        <end position="21"/>
    </location>
</feature>
<feature type="chain" id="PRO_0000325958" description="Interleukin-17 receptor E-like protein">
    <location>
        <begin position="22"/>
        <end position="507"/>
    </location>
</feature>
<feature type="splice variant" id="VSP_062154" description="In isoform 2.">
    <location>
        <begin position="1"/>
        <end position="57"/>
    </location>
</feature>
<feature type="splice variant" id="VSP_062155" description="In isoform 2.">
    <location>
        <begin position="169"/>
        <end position="183"/>
    </location>
</feature>
<feature type="splice variant" id="VSP_062156" description="In isoform 2.">
    <original>WKMTIQPSPTKGHLRVTFFSSSPAHFQVHLCHRRKSQLPACQR</original>
    <variation>PPTSRCTCVTGGSHSSLPANAHSRPARSLQPQVTWQPPLLLPS</variation>
    <location>
        <begin position="366"/>
        <end position="408"/>
    </location>
</feature>
<feature type="splice variant" id="VSP_062157" description="In isoform 2.">
    <location>
        <begin position="409"/>
        <end position="507"/>
    </location>
</feature>
<feature type="sequence variant" id="VAR_061187" description="In dbSNP:rs9617090.">
    <original>G</original>
    <variation>R</variation>
    <location>
        <position position="127"/>
    </location>
</feature>
<feature type="sequence variant" id="VAR_039957" description="In dbSNP:rs5771069.">
    <original>L</original>
    <variation>P</variation>
    <location>
        <position position="415"/>
    </location>
</feature>
<feature type="sequence conflict" description="In Ref. 1; BAC85743." evidence="2" ref="1">
    <original>GGQ</original>
    <variation>RGR</variation>
    <location>
        <begin position="127"/>
        <end position="129"/>
    </location>
</feature>
<feature type="sequence conflict" description="In Ref. 1; BAC85743." evidence="2" ref="1">
    <original>S</original>
    <variation>P</variation>
    <location>
        <position position="237"/>
    </location>
</feature>
<name>I17EL_HUMAN</name>
<dbReference type="EMBL" id="AK123987">
    <property type="protein sequence ID" value="BAC85743.1"/>
    <property type="molecule type" value="mRNA"/>
</dbReference>
<dbReference type="EMBL" id="AL022327">
    <property type="status" value="NOT_ANNOTATED_CDS"/>
    <property type="molecule type" value="Genomic_DNA"/>
</dbReference>
<dbReference type="CCDS" id="CCDS93182.1">
    <molecule id="Q6ZVW7-1"/>
</dbReference>
<dbReference type="RefSeq" id="NP_001001694.2">
    <molecule id="Q6ZVW7-2"/>
    <property type="nucleotide sequence ID" value="NM_001001694.3"/>
</dbReference>
<dbReference type="RefSeq" id="NP_001358346.1">
    <molecule id="Q6ZVW7-1"/>
    <property type="nucleotide sequence ID" value="NM_001371417.1"/>
</dbReference>
<dbReference type="RefSeq" id="XP_016884287.1">
    <property type="nucleotide sequence ID" value="XM_017028798.1"/>
</dbReference>
<dbReference type="BioGRID" id="134822">
    <property type="interactions" value="1"/>
</dbReference>
<dbReference type="FunCoup" id="Q6ZVW7">
    <property type="interactions" value="2"/>
</dbReference>
<dbReference type="STRING" id="9606.ENSP00000374633"/>
<dbReference type="iPTMnet" id="Q6ZVW7"/>
<dbReference type="BioMuta" id="IL17REL"/>
<dbReference type="DMDM" id="172046175"/>
<dbReference type="jPOST" id="Q6ZVW7"/>
<dbReference type="MassIVE" id="Q6ZVW7"/>
<dbReference type="PaxDb" id="9606-ENSP00000374633"/>
<dbReference type="PeptideAtlas" id="Q6ZVW7"/>
<dbReference type="Antibodypedia" id="52494">
    <property type="antibodies" value="9 antibodies from 8 providers"/>
</dbReference>
<dbReference type="DNASU" id="400935"/>
<dbReference type="Ensembl" id="ENST00000695950.1">
    <molecule id="Q6ZVW7-1"/>
    <property type="protein sequence ID" value="ENSP00000512282.1"/>
    <property type="gene ID" value="ENSG00000188263.11"/>
</dbReference>
<dbReference type="GeneID" id="400935"/>
<dbReference type="KEGG" id="hsa:400935"/>
<dbReference type="MANE-Select" id="ENST00000695950.1">
    <property type="protein sequence ID" value="ENSP00000512282.1"/>
    <property type="RefSeq nucleotide sequence ID" value="NM_001371417.1"/>
    <property type="RefSeq protein sequence ID" value="NP_001358346.1"/>
</dbReference>
<dbReference type="UCSC" id="uc003bje.2">
    <molecule id="Q6ZVW7-1"/>
    <property type="organism name" value="human"/>
</dbReference>
<dbReference type="AGR" id="HGNC:33808"/>
<dbReference type="CTD" id="400935"/>
<dbReference type="DisGeNET" id="400935"/>
<dbReference type="GeneCards" id="IL17REL"/>
<dbReference type="HGNC" id="HGNC:33808">
    <property type="gene designation" value="IL17REL"/>
</dbReference>
<dbReference type="MIM" id="613414">
    <property type="type" value="gene"/>
</dbReference>
<dbReference type="neXtProt" id="NX_Q6ZVW7"/>
<dbReference type="OpenTargets" id="ENSG00000188263"/>
<dbReference type="PharmGKB" id="PA162391970"/>
<dbReference type="VEuPathDB" id="HostDB:ENSG00000188263"/>
<dbReference type="eggNOG" id="ENOG502QTUV">
    <property type="taxonomic scope" value="Eukaryota"/>
</dbReference>
<dbReference type="GeneTree" id="ENSGT00940000162605"/>
<dbReference type="HOGENOM" id="CLU_039632_0_0_1"/>
<dbReference type="InParanoid" id="Q6ZVW7"/>
<dbReference type="OMA" id="CSQGLQC"/>
<dbReference type="OrthoDB" id="9877324at2759"/>
<dbReference type="PAN-GO" id="Q6ZVW7">
    <property type="GO annotations" value="1 GO annotation based on evolutionary models"/>
</dbReference>
<dbReference type="PhylomeDB" id="Q6ZVW7"/>
<dbReference type="TreeFam" id="TF335690"/>
<dbReference type="PathwayCommons" id="Q6ZVW7"/>
<dbReference type="BioGRID-ORCS" id="400935">
    <property type="hits" value="9 hits in 1157 CRISPR screens"/>
</dbReference>
<dbReference type="ChiTaRS" id="IL17REL">
    <property type="organism name" value="human"/>
</dbReference>
<dbReference type="GenomeRNAi" id="400935"/>
<dbReference type="Pharos" id="Q6ZVW7">
    <property type="development level" value="Tdark"/>
</dbReference>
<dbReference type="PRO" id="PR:Q6ZVW7"/>
<dbReference type="Proteomes" id="UP000005640">
    <property type="component" value="Chromosome 22"/>
</dbReference>
<dbReference type="RNAct" id="Q6ZVW7">
    <property type="molecule type" value="protein"/>
</dbReference>
<dbReference type="Bgee" id="ENSG00000188263">
    <property type="expression patterns" value="Expressed in mucosa of stomach and 27 other cell types or tissues"/>
</dbReference>
<dbReference type="GO" id="GO:0005576">
    <property type="term" value="C:extracellular region"/>
    <property type="evidence" value="ECO:0007669"/>
    <property type="project" value="UniProtKB-SubCell"/>
</dbReference>
<dbReference type="GO" id="GO:0030368">
    <property type="term" value="F:interleukin-17 receptor activity"/>
    <property type="evidence" value="ECO:0000318"/>
    <property type="project" value="GO_Central"/>
</dbReference>
<dbReference type="InterPro" id="IPR039465">
    <property type="entry name" value="IL-17_rcpt-like"/>
</dbReference>
<dbReference type="InterPro" id="IPR027841">
    <property type="entry name" value="IL-17_rcpt_C/E_N"/>
</dbReference>
<dbReference type="PANTHER" id="PTHR15583">
    <property type="entry name" value="INTERLEUKIN-17 RECEPTOR"/>
    <property type="match status" value="1"/>
</dbReference>
<dbReference type="PANTHER" id="PTHR15583:SF10">
    <property type="entry name" value="INTERLEUKIN-17 RECEPTOR E-LIKE-RELATED"/>
    <property type="match status" value="1"/>
</dbReference>
<dbReference type="Pfam" id="PF15037">
    <property type="entry name" value="IL17_R_N"/>
    <property type="match status" value="1"/>
</dbReference>
<reference key="1">
    <citation type="journal article" date="2004" name="Nat. Genet.">
        <title>Complete sequencing and characterization of 21,243 full-length human cDNAs.</title>
        <authorList>
            <person name="Ota T."/>
            <person name="Suzuki Y."/>
            <person name="Nishikawa T."/>
            <person name="Otsuki T."/>
            <person name="Sugiyama T."/>
            <person name="Irie R."/>
            <person name="Wakamatsu A."/>
            <person name="Hayashi K."/>
            <person name="Sato H."/>
            <person name="Nagai K."/>
            <person name="Kimura K."/>
            <person name="Makita H."/>
            <person name="Sekine M."/>
            <person name="Obayashi M."/>
            <person name="Nishi T."/>
            <person name="Shibahara T."/>
            <person name="Tanaka T."/>
            <person name="Ishii S."/>
            <person name="Yamamoto J."/>
            <person name="Saito K."/>
            <person name="Kawai Y."/>
            <person name="Isono Y."/>
            <person name="Nakamura Y."/>
            <person name="Nagahari K."/>
            <person name="Murakami K."/>
            <person name="Yasuda T."/>
            <person name="Iwayanagi T."/>
            <person name="Wagatsuma M."/>
            <person name="Shiratori A."/>
            <person name="Sudo H."/>
            <person name="Hosoiri T."/>
            <person name="Kaku Y."/>
            <person name="Kodaira H."/>
            <person name="Kondo H."/>
            <person name="Sugawara M."/>
            <person name="Takahashi M."/>
            <person name="Kanda K."/>
            <person name="Yokoi T."/>
            <person name="Furuya T."/>
            <person name="Kikkawa E."/>
            <person name="Omura Y."/>
            <person name="Abe K."/>
            <person name="Kamihara K."/>
            <person name="Katsuta N."/>
            <person name="Sato K."/>
            <person name="Tanikawa M."/>
            <person name="Yamazaki M."/>
            <person name="Ninomiya K."/>
            <person name="Ishibashi T."/>
            <person name="Yamashita H."/>
            <person name="Murakawa K."/>
            <person name="Fujimori K."/>
            <person name="Tanai H."/>
            <person name="Kimata M."/>
            <person name="Watanabe M."/>
            <person name="Hiraoka S."/>
            <person name="Chiba Y."/>
            <person name="Ishida S."/>
            <person name="Ono Y."/>
            <person name="Takiguchi S."/>
            <person name="Watanabe S."/>
            <person name="Yosida M."/>
            <person name="Hotuta T."/>
            <person name="Kusano J."/>
            <person name="Kanehori K."/>
            <person name="Takahashi-Fujii A."/>
            <person name="Hara H."/>
            <person name="Tanase T.-O."/>
            <person name="Nomura Y."/>
            <person name="Togiya S."/>
            <person name="Komai F."/>
            <person name="Hara R."/>
            <person name="Takeuchi K."/>
            <person name="Arita M."/>
            <person name="Imose N."/>
            <person name="Musashino K."/>
            <person name="Yuuki H."/>
            <person name="Oshima A."/>
            <person name="Sasaki N."/>
            <person name="Aotsuka S."/>
            <person name="Yoshikawa Y."/>
            <person name="Matsunawa H."/>
            <person name="Ichihara T."/>
            <person name="Shiohata N."/>
            <person name="Sano S."/>
            <person name="Moriya S."/>
            <person name="Momiyama H."/>
            <person name="Satoh N."/>
            <person name="Takami S."/>
            <person name="Terashima Y."/>
            <person name="Suzuki O."/>
            <person name="Nakagawa S."/>
            <person name="Senoh A."/>
            <person name="Mizoguchi H."/>
            <person name="Goto Y."/>
            <person name="Shimizu F."/>
            <person name="Wakebe H."/>
            <person name="Hishigaki H."/>
            <person name="Watanabe T."/>
            <person name="Sugiyama A."/>
            <person name="Takemoto M."/>
            <person name="Kawakami B."/>
            <person name="Yamazaki M."/>
            <person name="Watanabe K."/>
            <person name="Kumagai A."/>
            <person name="Itakura S."/>
            <person name="Fukuzumi Y."/>
            <person name="Fujimori Y."/>
            <person name="Komiyama M."/>
            <person name="Tashiro H."/>
            <person name="Tanigami A."/>
            <person name="Fujiwara T."/>
            <person name="Ono T."/>
            <person name="Yamada K."/>
            <person name="Fujii Y."/>
            <person name="Ozaki K."/>
            <person name="Hirao M."/>
            <person name="Ohmori Y."/>
            <person name="Kawabata A."/>
            <person name="Hikiji T."/>
            <person name="Kobatake N."/>
            <person name="Inagaki H."/>
            <person name="Ikema Y."/>
            <person name="Okamoto S."/>
            <person name="Okitani R."/>
            <person name="Kawakami T."/>
            <person name="Noguchi S."/>
            <person name="Itoh T."/>
            <person name="Shigeta K."/>
            <person name="Senba T."/>
            <person name="Matsumura K."/>
            <person name="Nakajima Y."/>
            <person name="Mizuno T."/>
            <person name="Morinaga M."/>
            <person name="Sasaki M."/>
            <person name="Togashi T."/>
            <person name="Oyama M."/>
            <person name="Hata H."/>
            <person name="Watanabe M."/>
            <person name="Komatsu T."/>
            <person name="Mizushima-Sugano J."/>
            <person name="Satoh T."/>
            <person name="Shirai Y."/>
            <person name="Takahashi Y."/>
            <person name="Nakagawa K."/>
            <person name="Okumura K."/>
            <person name="Nagase T."/>
            <person name="Nomura N."/>
            <person name="Kikuchi H."/>
            <person name="Masuho Y."/>
            <person name="Yamashita R."/>
            <person name="Nakai K."/>
            <person name="Yada T."/>
            <person name="Nakamura Y."/>
            <person name="Ohara O."/>
            <person name="Isogai T."/>
            <person name="Sugano S."/>
        </authorList>
    </citation>
    <scope>NUCLEOTIDE SEQUENCE [LARGE SCALE MRNA] (ISOFORM 2)</scope>
    <source>
        <tissue>Spleen</tissue>
    </source>
</reference>
<reference key="2">
    <citation type="journal article" date="1999" name="Nature">
        <title>The DNA sequence of human chromosome 22.</title>
        <authorList>
            <person name="Dunham I."/>
            <person name="Hunt A.R."/>
            <person name="Collins J.E."/>
            <person name="Bruskiewich R."/>
            <person name="Beare D.M."/>
            <person name="Clamp M."/>
            <person name="Smink L.J."/>
            <person name="Ainscough R."/>
            <person name="Almeida J.P."/>
            <person name="Babbage A.K."/>
            <person name="Bagguley C."/>
            <person name="Bailey J."/>
            <person name="Barlow K.F."/>
            <person name="Bates K.N."/>
            <person name="Beasley O.P."/>
            <person name="Bird C.P."/>
            <person name="Blakey S.E."/>
            <person name="Bridgeman A.M."/>
            <person name="Buck D."/>
            <person name="Burgess J."/>
            <person name="Burrill W.D."/>
            <person name="Burton J."/>
            <person name="Carder C."/>
            <person name="Carter N.P."/>
            <person name="Chen Y."/>
            <person name="Clark G."/>
            <person name="Clegg S.M."/>
            <person name="Cobley V.E."/>
            <person name="Cole C.G."/>
            <person name="Collier R.E."/>
            <person name="Connor R."/>
            <person name="Conroy D."/>
            <person name="Corby N.R."/>
            <person name="Coville G.J."/>
            <person name="Cox A.V."/>
            <person name="Davis J."/>
            <person name="Dawson E."/>
            <person name="Dhami P.D."/>
            <person name="Dockree C."/>
            <person name="Dodsworth S.J."/>
            <person name="Durbin R.M."/>
            <person name="Ellington A.G."/>
            <person name="Evans K.L."/>
            <person name="Fey J.M."/>
            <person name="Fleming K."/>
            <person name="French L."/>
            <person name="Garner A.A."/>
            <person name="Gilbert J.G.R."/>
            <person name="Goward M.E."/>
            <person name="Grafham D.V."/>
            <person name="Griffiths M.N.D."/>
            <person name="Hall C."/>
            <person name="Hall R.E."/>
            <person name="Hall-Tamlyn G."/>
            <person name="Heathcott R.W."/>
            <person name="Ho S."/>
            <person name="Holmes S."/>
            <person name="Hunt S.E."/>
            <person name="Jones M.C."/>
            <person name="Kershaw J."/>
            <person name="Kimberley A.M."/>
            <person name="King A."/>
            <person name="Laird G.K."/>
            <person name="Langford C.F."/>
            <person name="Leversha M.A."/>
            <person name="Lloyd C."/>
            <person name="Lloyd D.M."/>
            <person name="Martyn I.D."/>
            <person name="Mashreghi-Mohammadi M."/>
            <person name="Matthews L.H."/>
            <person name="Mccann O.T."/>
            <person name="Mcclay J."/>
            <person name="Mclaren S."/>
            <person name="McMurray A.A."/>
            <person name="Milne S.A."/>
            <person name="Mortimore B.J."/>
            <person name="Odell C.N."/>
            <person name="Pavitt R."/>
            <person name="Pearce A.V."/>
            <person name="Pearson D."/>
            <person name="Phillimore B.J.C.T."/>
            <person name="Phillips S.H."/>
            <person name="Plumb R.W."/>
            <person name="Ramsay H."/>
            <person name="Ramsey Y."/>
            <person name="Rogers L."/>
            <person name="Ross M.T."/>
            <person name="Scott C.E."/>
            <person name="Sehra H.K."/>
            <person name="Skuce C.D."/>
            <person name="Smalley S."/>
            <person name="Smith M.L."/>
            <person name="Soderlund C."/>
            <person name="Spragon L."/>
            <person name="Steward C.A."/>
            <person name="Sulston J.E."/>
            <person name="Swann R.M."/>
            <person name="Vaudin M."/>
            <person name="Wall M."/>
            <person name="Wallis J.M."/>
            <person name="Whiteley M.N."/>
            <person name="Willey D.L."/>
            <person name="Williams L."/>
            <person name="Williams S.A."/>
            <person name="Williamson H."/>
            <person name="Wilmer T.E."/>
            <person name="Wilming L."/>
            <person name="Wright C.L."/>
            <person name="Hubbard T."/>
            <person name="Bentley D.R."/>
            <person name="Beck S."/>
            <person name="Rogers J."/>
            <person name="Shimizu N."/>
            <person name="Minoshima S."/>
            <person name="Kawasaki K."/>
            <person name="Sasaki T."/>
            <person name="Asakawa S."/>
            <person name="Kudoh J."/>
            <person name="Shintani A."/>
            <person name="Shibuya K."/>
            <person name="Yoshizaki Y."/>
            <person name="Aoki N."/>
            <person name="Mitsuyama S."/>
            <person name="Roe B.A."/>
            <person name="Chen F."/>
            <person name="Chu L."/>
            <person name="Crabtree J."/>
            <person name="Deschamps S."/>
            <person name="Do A."/>
            <person name="Do T."/>
            <person name="Dorman A."/>
            <person name="Fang F."/>
            <person name="Fu Y."/>
            <person name="Hu P."/>
            <person name="Hua A."/>
            <person name="Kenton S."/>
            <person name="Lai H."/>
            <person name="Lao H.I."/>
            <person name="Lewis J."/>
            <person name="Lewis S."/>
            <person name="Lin S.-P."/>
            <person name="Loh P."/>
            <person name="Malaj E."/>
            <person name="Nguyen T."/>
            <person name="Pan H."/>
            <person name="Phan S."/>
            <person name="Qi S."/>
            <person name="Qian Y."/>
            <person name="Ray L."/>
            <person name="Ren Q."/>
            <person name="Shaull S."/>
            <person name="Sloan D."/>
            <person name="Song L."/>
            <person name="Wang Q."/>
            <person name="Wang Y."/>
            <person name="Wang Z."/>
            <person name="White J."/>
            <person name="Willingham D."/>
            <person name="Wu H."/>
            <person name="Yao Z."/>
            <person name="Zhan M."/>
            <person name="Zhang G."/>
            <person name="Chissoe S."/>
            <person name="Murray J."/>
            <person name="Miller N."/>
            <person name="Minx P."/>
            <person name="Fulton R."/>
            <person name="Johnson D."/>
            <person name="Bemis G."/>
            <person name="Bentley D."/>
            <person name="Bradshaw H."/>
            <person name="Bourne S."/>
            <person name="Cordes M."/>
            <person name="Du Z."/>
            <person name="Fulton L."/>
            <person name="Goela D."/>
            <person name="Graves T."/>
            <person name="Hawkins J."/>
            <person name="Hinds K."/>
            <person name="Kemp K."/>
            <person name="Latreille P."/>
            <person name="Layman D."/>
            <person name="Ozersky P."/>
            <person name="Rohlfing T."/>
            <person name="Scheet P."/>
            <person name="Walker C."/>
            <person name="Wamsley A."/>
            <person name="Wohldmann P."/>
            <person name="Pepin K."/>
            <person name="Nelson J."/>
            <person name="Korf I."/>
            <person name="Bedell J.A."/>
            <person name="Hillier L.W."/>
            <person name="Mardis E."/>
            <person name="Waterston R."/>
            <person name="Wilson R."/>
            <person name="Emanuel B.S."/>
            <person name="Shaikh T."/>
            <person name="Kurahashi H."/>
            <person name="Saitta S."/>
            <person name="Budarf M.L."/>
            <person name="McDermid H.E."/>
            <person name="Johnson A."/>
            <person name="Wong A.C.C."/>
            <person name="Morrow B.E."/>
            <person name="Edelmann L."/>
            <person name="Kim U.J."/>
            <person name="Shizuya H."/>
            <person name="Simon M.I."/>
            <person name="Dumanski J.P."/>
            <person name="Peyrard M."/>
            <person name="Kedra D."/>
            <person name="Seroussi E."/>
            <person name="Fransson I."/>
            <person name="Tapia I."/>
            <person name="Bruder C.E."/>
            <person name="O'Brien K.P."/>
            <person name="Wilkinson P."/>
            <person name="Bodenteich A."/>
            <person name="Hartman K."/>
            <person name="Hu X."/>
            <person name="Khan A.S."/>
            <person name="Lane L."/>
            <person name="Tilahun Y."/>
            <person name="Wright H."/>
        </authorList>
    </citation>
    <scope>NUCLEOTIDE SEQUENCE [LARGE SCALE GENOMIC DNA]</scope>
</reference>
<gene>
    <name evidence="3" type="primary">IL17REL</name>
</gene>
<sequence>MLAGQALAFLGLTWGTFQSLAIPRITECGLSCSQGFACRSHRNRNIFNSFCRPRPVSMSRSVLEALTSSTAMQCVPSDGCAMLLRVRASITLHERLRGLEACAMSLDTQETQCQSVWVARASHRQQGGQQLQVHFGCFAVSVAQHLYVTLRTIPHFCGVQLDQRHLVEDCGEEDVGRSVPDCLAGKLSYWVDRRRKAILVQVPRASGSPDYYLRLCLKRFTCEDAGAPVRVTANSVSQAVFLPYSQELPCLCLEGWSATPDAVRIQICPFENDTEALEVLWDTVYYHPESQTLSWEPACPVSGHVSLCWRPGPGAGCRKLQQSSQLVHRRVQYPLVDTQPQLCLKFSTSWGSWVRCPFEQRRFPTWKMTIQPSPTKGHLRVTFFSSSPAHFQVHLCHRRKSQLPACQRTLQASPLPSASGDLAAAPAFAFLDLPREEACAPGICIQGWRTDVHFSVPQQLCNLRSSGCPSLRGRRRPRTRPRPPTAGWAWRALNRRLGGGNGETIRP</sequence>
<organism>
    <name type="scientific">Homo sapiens</name>
    <name type="common">Human</name>
    <dbReference type="NCBI Taxonomy" id="9606"/>
    <lineage>
        <taxon>Eukaryota</taxon>
        <taxon>Metazoa</taxon>
        <taxon>Chordata</taxon>
        <taxon>Craniata</taxon>
        <taxon>Vertebrata</taxon>
        <taxon>Euteleostomi</taxon>
        <taxon>Mammalia</taxon>
        <taxon>Eutheria</taxon>
        <taxon>Euarchontoglires</taxon>
        <taxon>Primates</taxon>
        <taxon>Haplorrhini</taxon>
        <taxon>Catarrhini</taxon>
        <taxon>Hominidae</taxon>
        <taxon>Homo</taxon>
    </lineage>
</organism>
<proteinExistence type="evidence at protein level"/>
<evidence type="ECO:0000255" key="1"/>
<evidence type="ECO:0000305" key="2"/>
<evidence type="ECO:0000312" key="3">
    <source>
        <dbReference type="HGNC" id="HGNC:33808"/>
    </source>
</evidence>
<protein>
    <recommendedName>
        <fullName evidence="2">Interleukin-17 receptor E-like protein</fullName>
        <shortName>IL-17 receptor E-like</shortName>
        <shortName>IL-17RE-like</shortName>
    </recommendedName>
</protein>